<proteinExistence type="evidence at protein level"/>
<comment type="subcellular location">
    <subcellularLocation>
        <location evidence="1 3">Secreted</location>
    </subcellularLocation>
</comment>
<comment type="tissue specificity">
    <text evidence="1">Expressed in the antennal lobe (at protein level).</text>
</comment>
<organism>
    <name type="scientific">Pentatoma rufipes</name>
    <name type="common">Forest bug</name>
    <name type="synonym">Cimex rufipes</name>
    <dbReference type="NCBI Taxonomy" id="286670"/>
    <lineage>
        <taxon>Eukaryota</taxon>
        <taxon>Metazoa</taxon>
        <taxon>Ecdysozoa</taxon>
        <taxon>Arthropoda</taxon>
        <taxon>Hexapoda</taxon>
        <taxon>Insecta</taxon>
        <taxon>Pterygota</taxon>
        <taxon>Neoptera</taxon>
        <taxon>Paraneoptera</taxon>
        <taxon>Hemiptera</taxon>
        <taxon>Heteroptera</taxon>
        <taxon>Panheteroptera</taxon>
        <taxon>Pentatomomorpha</taxon>
        <taxon>Pentatomoidea</taxon>
        <taxon>Pentatomidae</taxon>
        <taxon>Pentatominae</taxon>
        <taxon>Pentatoma</taxon>
    </lineage>
</organism>
<reference evidence="3" key="1">
    <citation type="journal article" date="2009" name="Peptides">
        <title>Neuropeptides in Heteroptera: identification of allatotropin-related peptide and tachykinin-related peptides using MALDI-TOF mass spectrometry.</title>
        <authorList>
            <person name="Neupert S."/>
            <person name="Russell W.K."/>
            <person name="Russell D.H."/>
            <person name="Lopez J.D. Jr."/>
            <person name="Predel R."/>
            <person name="Nachman R.J."/>
        </authorList>
    </citation>
    <scope>PROTEIN SEQUENCE</scope>
    <scope>SUBCELLULAR LOCATION</scope>
    <scope>TISSUE SPECIFICITY</scope>
    <scope>AMIDATION AT ARG-10</scope>
    <source>
        <tissue evidence="1">Antennal lobe</tissue>
    </source>
</reference>
<protein>
    <recommendedName>
        <fullName evidence="2">Tachykinin-related peptide 3</fullName>
        <shortName evidence="2">TKRP-3</shortName>
    </recommendedName>
</protein>
<feature type="peptide" id="PRO_0000395658" description="Tachykinin-related peptide 3" evidence="1">
    <location>
        <begin position="1"/>
        <end position="10"/>
    </location>
</feature>
<feature type="modified residue" description="Arginine amide" evidence="1">
    <location>
        <position position="10"/>
    </location>
</feature>
<evidence type="ECO:0000269" key="1">
    <source>
    </source>
</evidence>
<evidence type="ECO:0000303" key="2">
    <source>
    </source>
</evidence>
<evidence type="ECO:0000305" key="3"/>
<accession>P86589</accession>
<name>TRP3_PENRU</name>
<keyword id="KW-0027">Amidation</keyword>
<keyword id="KW-0903">Direct protein sequencing</keyword>
<keyword id="KW-0527">Neuropeptide</keyword>
<keyword id="KW-0964">Secreted</keyword>
<sequence>GPSSGFFGMR</sequence>
<dbReference type="GO" id="GO:0005576">
    <property type="term" value="C:extracellular region"/>
    <property type="evidence" value="ECO:0007005"/>
    <property type="project" value="UniProtKB"/>
</dbReference>
<dbReference type="GO" id="GO:0007218">
    <property type="term" value="P:neuropeptide signaling pathway"/>
    <property type="evidence" value="ECO:0007669"/>
    <property type="project" value="UniProtKB-KW"/>
</dbReference>